<keyword id="KW-0597">Phosphoprotein</keyword>
<keyword id="KW-1185">Reference proteome</keyword>
<keyword id="KW-0677">Repeat</keyword>
<keyword id="KW-0802">TPR repeat</keyword>
<accession>Q3V038</accession>
<accession>B2RTC7</accession>
<accession>Q3TTA0</accession>
<accession>Q6A0A0</accession>
<accession>Q8K336</accession>
<dbReference type="EMBL" id="AK172918">
    <property type="protein sequence ID" value="BAD32196.1"/>
    <property type="status" value="ALT_INIT"/>
    <property type="molecule type" value="mRNA"/>
</dbReference>
<dbReference type="EMBL" id="AK133456">
    <property type="protein sequence ID" value="BAE21667.1"/>
    <property type="molecule type" value="mRNA"/>
</dbReference>
<dbReference type="EMBL" id="AK161499">
    <property type="protein sequence ID" value="BAE36425.1"/>
    <property type="molecule type" value="mRNA"/>
</dbReference>
<dbReference type="EMBL" id="BC028891">
    <property type="protein sequence ID" value="AAH28891.1"/>
    <property type="status" value="ALT_INIT"/>
    <property type="molecule type" value="mRNA"/>
</dbReference>
<dbReference type="EMBL" id="BC139242">
    <property type="protein sequence ID" value="AAI39243.1"/>
    <property type="molecule type" value="mRNA"/>
</dbReference>
<dbReference type="EMBL" id="BC139244">
    <property type="protein sequence ID" value="AAI39245.1"/>
    <property type="molecule type" value="mRNA"/>
</dbReference>
<dbReference type="CCDS" id="CCDS26024.1"/>
<dbReference type="RefSeq" id="NP_001028321.1">
    <property type="nucleotide sequence ID" value="NM_001033149.3"/>
</dbReference>
<dbReference type="SMR" id="Q3V038"/>
<dbReference type="FunCoup" id="Q3V038">
    <property type="interactions" value="431"/>
</dbReference>
<dbReference type="STRING" id="10090.ENSMUSP00000152038"/>
<dbReference type="iPTMnet" id="Q3V038"/>
<dbReference type="PhosphoSitePlus" id="Q3V038"/>
<dbReference type="PaxDb" id="10090-ENSMUSP00000048590"/>
<dbReference type="PeptideAtlas" id="Q3V038"/>
<dbReference type="ProteomicsDB" id="297676"/>
<dbReference type="Antibodypedia" id="55304">
    <property type="antibodies" value="4 antibodies from 4 providers"/>
</dbReference>
<dbReference type="Ensembl" id="ENSMUST00000036116.6">
    <property type="protein sequence ID" value="ENSMUSP00000048590.6"/>
    <property type="gene ID" value="ENSMUSG00000042734.7"/>
</dbReference>
<dbReference type="Ensembl" id="ENSMUST00000218362.2">
    <property type="protein sequence ID" value="ENSMUSP00000152038.2"/>
    <property type="gene ID" value="ENSMUSG00000042734.7"/>
</dbReference>
<dbReference type="GeneID" id="69480"/>
<dbReference type="KEGG" id="mmu:69480"/>
<dbReference type="UCSC" id="uc007ocm.1">
    <property type="organism name" value="mouse"/>
</dbReference>
<dbReference type="AGR" id="MGI:1916730"/>
<dbReference type="CTD" id="23508"/>
<dbReference type="MGI" id="MGI:1916730">
    <property type="gene designation" value="Ttc9"/>
</dbReference>
<dbReference type="VEuPathDB" id="HostDB:ENSMUSG00000042734"/>
<dbReference type="eggNOG" id="ENOG502QZUJ">
    <property type="taxonomic scope" value="Eukaryota"/>
</dbReference>
<dbReference type="GeneTree" id="ENSGT00940000161472"/>
<dbReference type="HOGENOM" id="CLU_100621_0_0_1"/>
<dbReference type="InParanoid" id="Q3V038"/>
<dbReference type="OMA" id="RSSGCGQ"/>
<dbReference type="OrthoDB" id="433738at2759"/>
<dbReference type="PhylomeDB" id="Q3V038"/>
<dbReference type="TreeFam" id="TF331917"/>
<dbReference type="BioGRID-ORCS" id="69480">
    <property type="hits" value="3 hits in 77 CRISPR screens"/>
</dbReference>
<dbReference type="ChiTaRS" id="Ttc9">
    <property type="organism name" value="mouse"/>
</dbReference>
<dbReference type="PRO" id="PR:Q3V038"/>
<dbReference type="Proteomes" id="UP000000589">
    <property type="component" value="Chromosome 12"/>
</dbReference>
<dbReference type="RNAct" id="Q3V038">
    <property type="molecule type" value="protein"/>
</dbReference>
<dbReference type="Bgee" id="ENSMUSG00000042734">
    <property type="expression patterns" value="Expressed in substantia nigra and 160 other cell types or tissues"/>
</dbReference>
<dbReference type="GO" id="GO:0060348">
    <property type="term" value="P:bone development"/>
    <property type="evidence" value="ECO:0000314"/>
    <property type="project" value="MGI"/>
</dbReference>
<dbReference type="FunFam" id="1.25.40.10:FF:000264">
    <property type="entry name" value="Tetratricopeptide repeat protein 9A"/>
    <property type="match status" value="1"/>
</dbReference>
<dbReference type="Gene3D" id="1.25.40.10">
    <property type="entry name" value="Tetratricopeptide repeat domain"/>
    <property type="match status" value="1"/>
</dbReference>
<dbReference type="InterPro" id="IPR050754">
    <property type="entry name" value="FKBP4/5/8-like"/>
</dbReference>
<dbReference type="InterPro" id="IPR011990">
    <property type="entry name" value="TPR-like_helical_dom_sf"/>
</dbReference>
<dbReference type="InterPro" id="IPR019734">
    <property type="entry name" value="TPR_rpt"/>
</dbReference>
<dbReference type="PANTHER" id="PTHR46512">
    <property type="entry name" value="PEPTIDYLPROLYL ISOMERASE"/>
    <property type="match status" value="1"/>
</dbReference>
<dbReference type="PANTHER" id="PTHR46512:SF5">
    <property type="entry name" value="TETRATRICOPEPTIDE REPEAT DOMAIN 9"/>
    <property type="match status" value="1"/>
</dbReference>
<dbReference type="Pfam" id="PF00515">
    <property type="entry name" value="TPR_1"/>
    <property type="match status" value="1"/>
</dbReference>
<dbReference type="SMART" id="SM00028">
    <property type="entry name" value="TPR"/>
    <property type="match status" value="3"/>
</dbReference>
<dbReference type="SUPFAM" id="SSF48452">
    <property type="entry name" value="TPR-like"/>
    <property type="match status" value="1"/>
</dbReference>
<dbReference type="PROSITE" id="PS50005">
    <property type="entry name" value="TPR"/>
    <property type="match status" value="1"/>
</dbReference>
<dbReference type="PROSITE" id="PS50293">
    <property type="entry name" value="TPR_REGION"/>
    <property type="match status" value="1"/>
</dbReference>
<evidence type="ECO:0000250" key="1">
    <source>
        <dbReference type="UniProtKB" id="Q92623"/>
    </source>
</evidence>
<evidence type="ECO:0000256" key="2">
    <source>
        <dbReference type="SAM" id="MobiDB-lite"/>
    </source>
</evidence>
<evidence type="ECO:0000305" key="3"/>
<comment type="similarity">
    <text evidence="3">Belongs to the TTC9 family.</text>
</comment>
<comment type="sequence caution" evidence="3">
    <conflict type="erroneous initiation">
        <sequence resource="EMBL-CDS" id="AAH28891"/>
    </conflict>
</comment>
<comment type="sequence caution" evidence="3">
    <conflict type="erroneous initiation">
        <sequence resource="EMBL-CDS" id="BAD32196"/>
    </conflict>
</comment>
<name>TTC9A_MOUSE</name>
<protein>
    <recommendedName>
        <fullName>Tetratricopeptide repeat protein 9A</fullName>
        <shortName>TPR repeat protein 9A</shortName>
    </recommendedName>
</protein>
<organism>
    <name type="scientific">Mus musculus</name>
    <name type="common">Mouse</name>
    <dbReference type="NCBI Taxonomy" id="10090"/>
    <lineage>
        <taxon>Eukaryota</taxon>
        <taxon>Metazoa</taxon>
        <taxon>Chordata</taxon>
        <taxon>Craniata</taxon>
        <taxon>Vertebrata</taxon>
        <taxon>Euteleostomi</taxon>
        <taxon>Mammalia</taxon>
        <taxon>Eutheria</taxon>
        <taxon>Euarchontoglires</taxon>
        <taxon>Glires</taxon>
        <taxon>Rodentia</taxon>
        <taxon>Myomorpha</taxon>
        <taxon>Muroidea</taxon>
        <taxon>Muridae</taxon>
        <taxon>Murinae</taxon>
        <taxon>Mus</taxon>
        <taxon>Mus</taxon>
    </lineage>
</organism>
<proteinExistence type="evidence at protein level"/>
<feature type="chain" id="PRO_0000294470" description="Tetratricopeptide repeat protein 9A">
    <location>
        <begin position="1"/>
        <end position="219"/>
    </location>
</feature>
<feature type="repeat" description="TPR 1">
    <location>
        <begin position="56"/>
        <end position="89"/>
    </location>
</feature>
<feature type="repeat" description="TPR 2">
    <location>
        <begin position="125"/>
        <end position="160"/>
    </location>
</feature>
<feature type="repeat" description="TPR 3">
    <location>
        <begin position="161"/>
        <end position="194"/>
    </location>
</feature>
<feature type="region of interest" description="Disordered" evidence="2">
    <location>
        <begin position="1"/>
        <end position="49"/>
    </location>
</feature>
<feature type="region of interest" description="Disordered" evidence="2">
    <location>
        <begin position="94"/>
        <end position="115"/>
    </location>
</feature>
<feature type="modified residue" description="Phosphoserine" evidence="1">
    <location>
        <position position="102"/>
    </location>
</feature>
<sequence length="219" mass="24351">MERKGLAARSSGNPSPPALGEGPRPVPPPCVPSGGGAPERGQAGTAAEPAELIRRAHEFKSQGAQCYKDKKFREAIGKYHRALLELKGLLPSQEERDARPASSAGVPKSSRLSEEQSKTVEAIEIDCYNSLAACLLQAELVNYERVKEYCLKVLKKEGENFKALYRSGVAFYHLGDYDKALYYLKEARTRQPTDTNVIRYIQLTEMKLSRCSQREKEAM</sequence>
<reference key="1">
    <citation type="journal article" date="2004" name="DNA Res.">
        <title>Prediction of the coding sequences of mouse homologues of KIAA gene: IV. The complete nucleotide sequences of 500 mouse KIAA-homologous cDNAs identified by screening of terminal sequences of cDNA clones randomly sampled from size-fractionated libraries.</title>
        <authorList>
            <person name="Okazaki N."/>
            <person name="Kikuno R."/>
            <person name="Ohara R."/>
            <person name="Inamoto S."/>
            <person name="Koseki H."/>
            <person name="Hiraoka S."/>
            <person name="Saga Y."/>
            <person name="Seino S."/>
            <person name="Nishimura M."/>
            <person name="Kaisho T."/>
            <person name="Hoshino K."/>
            <person name="Kitamura H."/>
            <person name="Nagase T."/>
            <person name="Ohara O."/>
            <person name="Koga H."/>
        </authorList>
    </citation>
    <scope>NUCLEOTIDE SEQUENCE [LARGE SCALE MRNA]</scope>
    <source>
        <tissue>Fetal brain</tissue>
    </source>
</reference>
<reference key="2">
    <citation type="journal article" date="2005" name="Science">
        <title>The transcriptional landscape of the mammalian genome.</title>
        <authorList>
            <person name="Carninci P."/>
            <person name="Kasukawa T."/>
            <person name="Katayama S."/>
            <person name="Gough J."/>
            <person name="Frith M.C."/>
            <person name="Maeda N."/>
            <person name="Oyama R."/>
            <person name="Ravasi T."/>
            <person name="Lenhard B."/>
            <person name="Wells C."/>
            <person name="Kodzius R."/>
            <person name="Shimokawa K."/>
            <person name="Bajic V.B."/>
            <person name="Brenner S.E."/>
            <person name="Batalov S."/>
            <person name="Forrest A.R."/>
            <person name="Zavolan M."/>
            <person name="Davis M.J."/>
            <person name="Wilming L.G."/>
            <person name="Aidinis V."/>
            <person name="Allen J.E."/>
            <person name="Ambesi-Impiombato A."/>
            <person name="Apweiler R."/>
            <person name="Aturaliya R.N."/>
            <person name="Bailey T.L."/>
            <person name="Bansal M."/>
            <person name="Baxter L."/>
            <person name="Beisel K.W."/>
            <person name="Bersano T."/>
            <person name="Bono H."/>
            <person name="Chalk A.M."/>
            <person name="Chiu K.P."/>
            <person name="Choudhary V."/>
            <person name="Christoffels A."/>
            <person name="Clutterbuck D.R."/>
            <person name="Crowe M.L."/>
            <person name="Dalla E."/>
            <person name="Dalrymple B.P."/>
            <person name="de Bono B."/>
            <person name="Della Gatta G."/>
            <person name="di Bernardo D."/>
            <person name="Down T."/>
            <person name="Engstrom P."/>
            <person name="Fagiolini M."/>
            <person name="Faulkner G."/>
            <person name="Fletcher C.F."/>
            <person name="Fukushima T."/>
            <person name="Furuno M."/>
            <person name="Futaki S."/>
            <person name="Gariboldi M."/>
            <person name="Georgii-Hemming P."/>
            <person name="Gingeras T.R."/>
            <person name="Gojobori T."/>
            <person name="Green R.E."/>
            <person name="Gustincich S."/>
            <person name="Harbers M."/>
            <person name="Hayashi Y."/>
            <person name="Hensch T.K."/>
            <person name="Hirokawa N."/>
            <person name="Hill D."/>
            <person name="Huminiecki L."/>
            <person name="Iacono M."/>
            <person name="Ikeo K."/>
            <person name="Iwama A."/>
            <person name="Ishikawa T."/>
            <person name="Jakt M."/>
            <person name="Kanapin A."/>
            <person name="Katoh M."/>
            <person name="Kawasawa Y."/>
            <person name="Kelso J."/>
            <person name="Kitamura H."/>
            <person name="Kitano H."/>
            <person name="Kollias G."/>
            <person name="Krishnan S.P."/>
            <person name="Kruger A."/>
            <person name="Kummerfeld S.K."/>
            <person name="Kurochkin I.V."/>
            <person name="Lareau L.F."/>
            <person name="Lazarevic D."/>
            <person name="Lipovich L."/>
            <person name="Liu J."/>
            <person name="Liuni S."/>
            <person name="McWilliam S."/>
            <person name="Madan Babu M."/>
            <person name="Madera M."/>
            <person name="Marchionni L."/>
            <person name="Matsuda H."/>
            <person name="Matsuzawa S."/>
            <person name="Miki H."/>
            <person name="Mignone F."/>
            <person name="Miyake S."/>
            <person name="Morris K."/>
            <person name="Mottagui-Tabar S."/>
            <person name="Mulder N."/>
            <person name="Nakano N."/>
            <person name="Nakauchi H."/>
            <person name="Ng P."/>
            <person name="Nilsson R."/>
            <person name="Nishiguchi S."/>
            <person name="Nishikawa S."/>
            <person name="Nori F."/>
            <person name="Ohara O."/>
            <person name="Okazaki Y."/>
            <person name="Orlando V."/>
            <person name="Pang K.C."/>
            <person name="Pavan W.J."/>
            <person name="Pavesi G."/>
            <person name="Pesole G."/>
            <person name="Petrovsky N."/>
            <person name="Piazza S."/>
            <person name="Reed J."/>
            <person name="Reid J.F."/>
            <person name="Ring B.Z."/>
            <person name="Ringwald M."/>
            <person name="Rost B."/>
            <person name="Ruan Y."/>
            <person name="Salzberg S.L."/>
            <person name="Sandelin A."/>
            <person name="Schneider C."/>
            <person name="Schoenbach C."/>
            <person name="Sekiguchi K."/>
            <person name="Semple C.A."/>
            <person name="Seno S."/>
            <person name="Sessa L."/>
            <person name="Sheng Y."/>
            <person name="Shibata Y."/>
            <person name="Shimada H."/>
            <person name="Shimada K."/>
            <person name="Silva D."/>
            <person name="Sinclair B."/>
            <person name="Sperling S."/>
            <person name="Stupka E."/>
            <person name="Sugiura K."/>
            <person name="Sultana R."/>
            <person name="Takenaka Y."/>
            <person name="Taki K."/>
            <person name="Tammoja K."/>
            <person name="Tan S.L."/>
            <person name="Tang S."/>
            <person name="Taylor M.S."/>
            <person name="Tegner J."/>
            <person name="Teichmann S.A."/>
            <person name="Ueda H.R."/>
            <person name="van Nimwegen E."/>
            <person name="Verardo R."/>
            <person name="Wei C.L."/>
            <person name="Yagi K."/>
            <person name="Yamanishi H."/>
            <person name="Zabarovsky E."/>
            <person name="Zhu S."/>
            <person name="Zimmer A."/>
            <person name="Hide W."/>
            <person name="Bult C."/>
            <person name="Grimmond S.M."/>
            <person name="Teasdale R.D."/>
            <person name="Liu E.T."/>
            <person name="Brusic V."/>
            <person name="Quackenbush J."/>
            <person name="Wahlestedt C."/>
            <person name="Mattick J.S."/>
            <person name="Hume D.A."/>
            <person name="Kai C."/>
            <person name="Sasaki D."/>
            <person name="Tomaru Y."/>
            <person name="Fukuda S."/>
            <person name="Kanamori-Katayama M."/>
            <person name="Suzuki M."/>
            <person name="Aoki J."/>
            <person name="Arakawa T."/>
            <person name="Iida J."/>
            <person name="Imamura K."/>
            <person name="Itoh M."/>
            <person name="Kato T."/>
            <person name="Kawaji H."/>
            <person name="Kawagashira N."/>
            <person name="Kawashima T."/>
            <person name="Kojima M."/>
            <person name="Kondo S."/>
            <person name="Konno H."/>
            <person name="Nakano K."/>
            <person name="Ninomiya N."/>
            <person name="Nishio T."/>
            <person name="Okada M."/>
            <person name="Plessy C."/>
            <person name="Shibata K."/>
            <person name="Shiraki T."/>
            <person name="Suzuki S."/>
            <person name="Tagami M."/>
            <person name="Waki K."/>
            <person name="Watahiki A."/>
            <person name="Okamura-Oho Y."/>
            <person name="Suzuki H."/>
            <person name="Kawai J."/>
            <person name="Hayashizaki Y."/>
        </authorList>
    </citation>
    <scope>NUCLEOTIDE SEQUENCE [LARGE SCALE MRNA]</scope>
    <source>
        <strain>C57BL/6J</strain>
        <tissue>Testis</tissue>
    </source>
</reference>
<reference key="3">
    <citation type="journal article" date="2004" name="Genome Res.">
        <title>The status, quality, and expansion of the NIH full-length cDNA project: the Mammalian Gene Collection (MGC).</title>
        <authorList>
            <consortium name="The MGC Project Team"/>
        </authorList>
    </citation>
    <scope>NUCLEOTIDE SEQUENCE [LARGE SCALE MRNA]</scope>
    <source>
        <strain>FVB/N</strain>
        <tissue>Brain</tissue>
        <tissue>Mammary tumor</tissue>
    </source>
</reference>
<reference key="4">
    <citation type="journal article" date="2010" name="Cell">
        <title>A tissue-specific atlas of mouse protein phosphorylation and expression.</title>
        <authorList>
            <person name="Huttlin E.L."/>
            <person name="Jedrychowski M.P."/>
            <person name="Elias J.E."/>
            <person name="Goswami T."/>
            <person name="Rad R."/>
            <person name="Beausoleil S.A."/>
            <person name="Villen J."/>
            <person name="Haas W."/>
            <person name="Sowa M.E."/>
            <person name="Gygi S.P."/>
        </authorList>
    </citation>
    <scope>IDENTIFICATION BY MASS SPECTROMETRY [LARGE SCALE ANALYSIS]</scope>
    <source>
        <tissue>Brain</tissue>
    </source>
</reference>
<gene>
    <name type="primary">Ttc9</name>
    <name type="synonym">Kiaa0227</name>
    <name type="synonym">Ttc9a</name>
</gene>